<organism>
    <name type="scientific">African swine fever virus (isolate Tick/Malawi/Lil 20-1/1983)</name>
    <name type="common">ASFV</name>
    <dbReference type="NCBI Taxonomy" id="10500"/>
    <lineage>
        <taxon>Viruses</taxon>
        <taxon>Varidnaviria</taxon>
        <taxon>Bamfordvirae</taxon>
        <taxon>Nucleocytoviricota</taxon>
        <taxon>Pokkesviricetes</taxon>
        <taxon>Asfuvirales</taxon>
        <taxon>Asfarviridae</taxon>
        <taxon>Asfivirus</taxon>
        <taxon>African swine fever virus</taxon>
    </lineage>
</organism>
<evidence type="ECO:0000250" key="1">
    <source>
        <dbReference type="UniProtKB" id="Q65187"/>
    </source>
</evidence>
<evidence type="ECO:0000305" key="2"/>
<accession>Q65232</accession>
<gene>
    <name type="ordered locus">Mal-124</name>
    <name type="ORF">j4R</name>
</gene>
<proteinExistence type="inferred from homology"/>
<dbReference type="EMBL" id="X71982">
    <property type="protein sequence ID" value="CAA50824.1"/>
    <property type="molecule type" value="Genomic_DNA"/>
</dbReference>
<dbReference type="EMBL" id="AY261361">
    <property type="status" value="NOT_ANNOTATED_CDS"/>
    <property type="molecule type" value="Genomic_DNA"/>
</dbReference>
<dbReference type="SMR" id="Q65232"/>
<dbReference type="Proteomes" id="UP000000860">
    <property type="component" value="Segment"/>
</dbReference>
<dbReference type="GO" id="GO:0030430">
    <property type="term" value="C:host cell cytoplasm"/>
    <property type="evidence" value="ECO:0007669"/>
    <property type="project" value="UniProtKB-SubCell"/>
</dbReference>
<dbReference type="GO" id="GO:0042025">
    <property type="term" value="C:host cell nucleus"/>
    <property type="evidence" value="ECO:0007669"/>
    <property type="project" value="UniProtKB-SubCell"/>
</dbReference>
<sequence length="339" mass="39880">MAGRVKIKQKELIDSTVKNKNVMNLFHEIIGSKGNINFSIVWPKFKKIKQSVYEYISILSVLEKASVMQNFEEDKKMLELFVQKLWAAYEGYFKYPEIEKYEVDGQVNFNLVPQYVLEKFSQLYRSRINSELVTLILNSCAFLSKYNDYILKKDPYILTITPGLCFSPIPNFEDLNFKYLYNSDKNSQHDKDFIMFILYKLYTAALGVYNAISIPDIDVEDLENIILSSVSQIKKQIPRCKDAFNKIESSVHLLRKNFNTYYSDYVGSGYNPTIIMEQYIKDISQDSKNISPRISYQFRTIIKYYRDMIATKHQTMDPQVLNLVKHVEKKLDMLDREKK</sequence>
<comment type="subunit">
    <text evidence="1">Interacts with host NACA (alpha chain of nascent polypeptide-associated complex).</text>
</comment>
<comment type="subcellular location">
    <subcellularLocation>
        <location evidence="1">Host cytoplasm</location>
    </subcellularLocation>
    <subcellularLocation>
        <location evidence="1">Host nucleus</location>
    </subcellularLocation>
</comment>
<comment type="induction">
    <text evidence="2">Expressed in the late phase of the viral replicative cycle.</text>
</comment>
<comment type="similarity">
    <text evidence="2">Belongs to the asfivirus H339R family.</text>
</comment>
<reference key="1">
    <citation type="journal article" date="1994" name="J. Gen. Virol.">
        <title>Nucleotide sequence of a 55 kbp region from the right end of the genome of a pathogenic African swine fever virus isolate (Malawi LIL20/1).</title>
        <authorList>
            <person name="Dixon L.K."/>
            <person name="Twigg S.R.F."/>
            <person name="Baylis S.A."/>
            <person name="Vydelingum S."/>
            <person name="Bristow C."/>
            <person name="Hammond J.M."/>
            <person name="Smith G.L."/>
        </authorList>
    </citation>
    <scope>NUCLEOTIDE SEQUENCE [GENOMIC DNA]</scope>
</reference>
<reference key="2">
    <citation type="submission" date="2003-03" db="EMBL/GenBank/DDBJ databases">
        <title>African swine fever virus genomes.</title>
        <authorList>
            <person name="Kutish G.F."/>
            <person name="Rock D.L."/>
        </authorList>
    </citation>
    <scope>NUCLEOTIDE SEQUENCE [LARGE SCALE GENOMIC DNA]</scope>
</reference>
<protein>
    <recommendedName>
        <fullName>Protein H339R</fullName>
        <shortName>pH339R</shortName>
    </recommendedName>
    <alternativeName>
        <fullName>Protein j4R</fullName>
    </alternativeName>
</protein>
<keyword id="KW-1035">Host cytoplasm</keyword>
<keyword id="KW-1048">Host nucleus</keyword>
<keyword id="KW-0945">Host-virus interaction</keyword>
<keyword id="KW-0426">Late protein</keyword>
<name>VFH33_ASFM2</name>
<feature type="chain" id="PRO_0000373771" description="Protein H339R">
    <location>
        <begin position="1"/>
        <end position="339"/>
    </location>
</feature>
<organismHost>
    <name type="scientific">Ornithodoros</name>
    <name type="common">relapsing fever ticks</name>
    <dbReference type="NCBI Taxonomy" id="6937"/>
</organismHost>
<organismHost>
    <name type="scientific">Phacochoerus aethiopicus</name>
    <name type="common">Warthog</name>
    <dbReference type="NCBI Taxonomy" id="85517"/>
</organismHost>
<organismHost>
    <name type="scientific">Phacochoerus africanus</name>
    <name type="common">Warthog</name>
    <dbReference type="NCBI Taxonomy" id="41426"/>
</organismHost>
<organismHost>
    <name type="scientific">Potamochoerus larvatus</name>
    <name type="common">Bushpig</name>
    <dbReference type="NCBI Taxonomy" id="273792"/>
</organismHost>
<organismHost>
    <name type="scientific">Sus scrofa</name>
    <name type="common">Pig</name>
    <dbReference type="NCBI Taxonomy" id="9823"/>
</organismHost>